<dbReference type="EMBL" id="D63148">
    <property type="protein sequence ID" value="BAA20092.1"/>
    <property type="molecule type" value="mRNA"/>
</dbReference>
<dbReference type="GO" id="GO:0005615">
    <property type="term" value="C:extracellular space"/>
    <property type="evidence" value="ECO:0007669"/>
    <property type="project" value="InterPro"/>
</dbReference>
<dbReference type="GO" id="GO:0008083">
    <property type="term" value="F:growth factor activity"/>
    <property type="evidence" value="ECO:0007669"/>
    <property type="project" value="InterPro"/>
</dbReference>
<dbReference type="GO" id="GO:0018445">
    <property type="term" value="F:prothoracicotrophic hormone activity"/>
    <property type="evidence" value="ECO:0000303"/>
    <property type="project" value="UniProtKB"/>
</dbReference>
<dbReference type="CDD" id="cd04366">
    <property type="entry name" value="IlGF_insulin_bombyxin_like"/>
    <property type="match status" value="1"/>
</dbReference>
<dbReference type="Gene3D" id="1.10.100.10">
    <property type="entry name" value="Insulin-like"/>
    <property type="match status" value="1"/>
</dbReference>
<dbReference type="InterPro" id="IPR017097">
    <property type="entry name" value="Bombyxin"/>
</dbReference>
<dbReference type="InterPro" id="IPR016179">
    <property type="entry name" value="Insulin-like"/>
</dbReference>
<dbReference type="InterPro" id="IPR036438">
    <property type="entry name" value="Insulin-like_sf"/>
</dbReference>
<dbReference type="InterPro" id="IPR022353">
    <property type="entry name" value="Insulin_CS"/>
</dbReference>
<dbReference type="InterPro" id="IPR022352">
    <property type="entry name" value="Insulin_family"/>
</dbReference>
<dbReference type="PANTHER" id="PTHR46886">
    <property type="entry name" value="INSULIN-LIKE GROWTH FACTOR II"/>
    <property type="match status" value="1"/>
</dbReference>
<dbReference type="PANTHER" id="PTHR46886:SF1">
    <property type="entry name" value="INSULIN-LIKE GROWTH FACTOR II"/>
    <property type="match status" value="1"/>
</dbReference>
<dbReference type="Pfam" id="PF00049">
    <property type="entry name" value="Insulin"/>
    <property type="match status" value="1"/>
</dbReference>
<dbReference type="PIRSF" id="PIRSF037038">
    <property type="entry name" value="Bombyxin"/>
    <property type="match status" value="1"/>
</dbReference>
<dbReference type="PRINTS" id="PR00276">
    <property type="entry name" value="INSULINFAMLY"/>
</dbReference>
<dbReference type="SMART" id="SM00078">
    <property type="entry name" value="IlGF"/>
    <property type="match status" value="1"/>
</dbReference>
<dbReference type="SUPFAM" id="SSF56994">
    <property type="entry name" value="Insulin-like"/>
    <property type="match status" value="1"/>
</dbReference>
<dbReference type="PROSITE" id="PS00262">
    <property type="entry name" value="INSULIN"/>
    <property type="match status" value="1"/>
</dbReference>
<accession>O09210</accession>
<protein>
    <recommendedName>
        <fullName>Bombyxin-related peptide B</fullName>
    </recommendedName>
    <alternativeName>
        <fullName>ABRP</fullName>
    </alternativeName>
    <component>
        <recommendedName>
            <fullName>Bombyxin-related peptide B chain B</fullName>
        </recommendedName>
    </component>
    <component>
        <recommendedName>
            <fullName>Bombyxin-related peptide B chain A</fullName>
        </recommendedName>
    </component>
</protein>
<organism evidence="6">
    <name type="scientific">Agrius convolvuli</name>
    <name type="common">Convolvulus hawk-moth</name>
    <dbReference type="NCBI Taxonomy" id="55055"/>
    <lineage>
        <taxon>Eukaryota</taxon>
        <taxon>Metazoa</taxon>
        <taxon>Ecdysozoa</taxon>
        <taxon>Arthropoda</taxon>
        <taxon>Hexapoda</taxon>
        <taxon>Insecta</taxon>
        <taxon>Pterygota</taxon>
        <taxon>Neoptera</taxon>
        <taxon>Endopterygota</taxon>
        <taxon>Lepidoptera</taxon>
        <taxon>Glossata</taxon>
        <taxon>Ditrysia</taxon>
        <taxon>Bombycoidea</taxon>
        <taxon>Sphingidae</taxon>
        <taxon>Sphinginae</taxon>
        <taxon>Acherontiini</taxon>
        <taxon>Agrius</taxon>
    </lineage>
</organism>
<feature type="signal peptide" evidence="2">
    <location>
        <begin position="1"/>
        <end position="21"/>
    </location>
</feature>
<feature type="peptide" id="PRO_0000015959" description="Bombyxin-related peptide B chain B">
    <location>
        <begin position="22"/>
        <end position="44"/>
    </location>
</feature>
<feature type="propeptide" id="PRO_0000015960" description="C peptide like">
    <location>
        <begin position="47"/>
        <end position="71"/>
    </location>
</feature>
<feature type="peptide" id="PRO_0000015961" description="Bombyxin-related peptide B chain A">
    <location>
        <begin position="74"/>
        <end position="93"/>
    </location>
</feature>
<feature type="disulfide bond" description="Interchain (between B and A chains)" evidence="1">
    <location>
        <begin position="25"/>
        <end position="80"/>
    </location>
</feature>
<feature type="disulfide bond" description="Interchain (between B and A chains)" evidence="1">
    <location>
        <begin position="37"/>
        <end position="93"/>
    </location>
</feature>
<feature type="disulfide bond" evidence="1">
    <location>
        <begin position="79"/>
        <end position="84"/>
    </location>
</feature>
<proteinExistence type="evidence at transcript level"/>
<evidence type="ECO:0000250" key="1"/>
<evidence type="ECO:0000255" key="2"/>
<evidence type="ECO:0000255" key="3">
    <source>
        <dbReference type="RuleBase" id="RU000406"/>
    </source>
</evidence>
<evidence type="ECO:0000269" key="4">
    <source>
    </source>
</evidence>
<evidence type="ECO:0000305" key="5"/>
<evidence type="ECO:0000312" key="6">
    <source>
        <dbReference type="EMBL" id="BAA20092.1"/>
    </source>
</evidence>
<comment type="subunit">
    <text evidence="1">Heterodimer of a B chain and an A chain linked by two disulfide bonds.</text>
</comment>
<comment type="subcellular location">
    <subcellularLocation>
        <location evidence="3 5">Secreted</location>
    </subcellularLocation>
</comment>
<comment type="tissue specificity">
    <text evidence="4">Located in 4 pairs of medial neurosecretory cells in the brain.</text>
</comment>
<comment type="similarity">
    <text evidence="5">Belongs to the insulin family.</text>
</comment>
<keyword id="KW-0165">Cleavage on pair of basic residues</keyword>
<keyword id="KW-1015">Disulfide bond</keyword>
<keyword id="KW-0372">Hormone</keyword>
<keyword id="KW-0964">Secreted</keyword>
<keyword id="KW-0732">Signal</keyword>
<name>BXRB_AGRCO</name>
<reference evidence="5" key="1">
    <citation type="journal article" date="1996" name="Insect Biochem. Mol. Biol.">
        <title>Bombyxin-related peptides: cDNA structure and expression in the brain of the hornworm Agrius convolvuli.</title>
        <authorList>
            <person name="Iwami M."/>
            <person name="Furuya I."/>
            <person name="Kataoka H."/>
        </authorList>
    </citation>
    <scope>NUCLEOTIDE SEQUENCE [MRNA]</scope>
    <scope>TISSUE SPECIFICITY</scope>
    <source>
        <tissue evidence="4">Brain</tissue>
    </source>
</reference>
<sequence>MKFVLVLVSLALLVSLASVQGNNYCGRHLSETLAYMCPELEGASKRSGAMGAAAMYGTRGWRWAAMGGNRGKRGVVEECCYQSCTLDELLTYC</sequence>